<feature type="chain" id="PRO_0000060480" description="tRNA (guanine-N(1)-)-methyltransferase">
    <location>
        <begin position="1"/>
        <end position="237"/>
    </location>
</feature>
<feature type="binding site" evidence="1">
    <location>
        <position position="112"/>
    </location>
    <ligand>
        <name>S-adenosyl-L-methionine</name>
        <dbReference type="ChEBI" id="CHEBI:59789"/>
    </ligand>
</feature>
<feature type="binding site" evidence="1">
    <location>
        <begin position="132"/>
        <end position="137"/>
    </location>
    <ligand>
        <name>S-adenosyl-L-methionine</name>
        <dbReference type="ChEBI" id="CHEBI:59789"/>
    </ligand>
</feature>
<protein>
    <recommendedName>
        <fullName evidence="1">tRNA (guanine-N(1)-)-methyltransferase</fullName>
        <ecNumber evidence="1">2.1.1.228</ecNumber>
    </recommendedName>
    <alternativeName>
        <fullName evidence="1">M1G-methyltransferase</fullName>
    </alternativeName>
    <alternativeName>
        <fullName evidence="1">tRNA [GM37] methyltransferase</fullName>
    </alternativeName>
</protein>
<proteinExistence type="inferred from homology"/>
<keyword id="KW-0963">Cytoplasm</keyword>
<keyword id="KW-0489">Methyltransferase</keyword>
<keyword id="KW-1185">Reference proteome</keyword>
<keyword id="KW-0949">S-adenosyl-L-methionine</keyword>
<keyword id="KW-0808">Transferase</keyword>
<keyword id="KW-0819">tRNA processing</keyword>
<gene>
    <name evidence="1" type="primary">trmD</name>
    <name type="ordered locus">tlr1611</name>
</gene>
<evidence type="ECO:0000255" key="1">
    <source>
        <dbReference type="HAMAP-Rule" id="MF_00605"/>
    </source>
</evidence>
<reference key="1">
    <citation type="journal article" date="2002" name="DNA Res.">
        <title>Complete genome structure of the thermophilic cyanobacterium Thermosynechococcus elongatus BP-1.</title>
        <authorList>
            <person name="Nakamura Y."/>
            <person name="Kaneko T."/>
            <person name="Sato S."/>
            <person name="Ikeuchi M."/>
            <person name="Katoh H."/>
            <person name="Sasamoto S."/>
            <person name="Watanabe A."/>
            <person name="Iriguchi M."/>
            <person name="Kawashima K."/>
            <person name="Kimura T."/>
            <person name="Kishida Y."/>
            <person name="Kiyokawa C."/>
            <person name="Kohara M."/>
            <person name="Matsumoto M."/>
            <person name="Matsuno A."/>
            <person name="Nakazaki N."/>
            <person name="Shimpo S."/>
            <person name="Sugimoto M."/>
            <person name="Takeuchi C."/>
            <person name="Yamada M."/>
            <person name="Tabata S."/>
        </authorList>
    </citation>
    <scope>NUCLEOTIDE SEQUENCE [LARGE SCALE GENOMIC DNA]</scope>
    <source>
        <strain>NIES-2133 / IAM M-273 / BP-1</strain>
    </source>
</reference>
<organism>
    <name type="scientific">Thermosynechococcus vestitus (strain NIES-2133 / IAM M-273 / BP-1)</name>
    <dbReference type="NCBI Taxonomy" id="197221"/>
    <lineage>
        <taxon>Bacteria</taxon>
        <taxon>Bacillati</taxon>
        <taxon>Cyanobacteriota</taxon>
        <taxon>Cyanophyceae</taxon>
        <taxon>Acaryochloridales</taxon>
        <taxon>Thermosynechococcaceae</taxon>
        <taxon>Thermosynechococcus</taxon>
    </lineage>
</organism>
<dbReference type="EC" id="2.1.1.228" evidence="1"/>
<dbReference type="EMBL" id="BA000039">
    <property type="protein sequence ID" value="BAC09163.1"/>
    <property type="molecule type" value="Genomic_DNA"/>
</dbReference>
<dbReference type="RefSeq" id="NP_682401.1">
    <property type="nucleotide sequence ID" value="NC_004113.1"/>
</dbReference>
<dbReference type="RefSeq" id="WP_011057450.1">
    <property type="nucleotide sequence ID" value="NC_004113.1"/>
</dbReference>
<dbReference type="SMR" id="Q8CWM2"/>
<dbReference type="STRING" id="197221.gene:10748213"/>
<dbReference type="EnsemblBacteria" id="BAC09163">
    <property type="protein sequence ID" value="BAC09163"/>
    <property type="gene ID" value="BAC09163"/>
</dbReference>
<dbReference type="KEGG" id="tel:tlr1611"/>
<dbReference type="PATRIC" id="fig|197221.4.peg.1690"/>
<dbReference type="eggNOG" id="COG0336">
    <property type="taxonomic scope" value="Bacteria"/>
</dbReference>
<dbReference type="Proteomes" id="UP000000440">
    <property type="component" value="Chromosome"/>
</dbReference>
<dbReference type="GO" id="GO:0005829">
    <property type="term" value="C:cytosol"/>
    <property type="evidence" value="ECO:0007669"/>
    <property type="project" value="TreeGrafter"/>
</dbReference>
<dbReference type="GO" id="GO:0052906">
    <property type="term" value="F:tRNA (guanine(37)-N1)-methyltransferase activity"/>
    <property type="evidence" value="ECO:0007669"/>
    <property type="project" value="UniProtKB-UniRule"/>
</dbReference>
<dbReference type="GO" id="GO:0002939">
    <property type="term" value="P:tRNA N1-guanine methylation"/>
    <property type="evidence" value="ECO:0007669"/>
    <property type="project" value="TreeGrafter"/>
</dbReference>
<dbReference type="CDD" id="cd18080">
    <property type="entry name" value="TrmD-like"/>
    <property type="match status" value="1"/>
</dbReference>
<dbReference type="FunFam" id="1.10.1270.20:FF:000001">
    <property type="entry name" value="tRNA (guanine-N(1)-)-methyltransferase"/>
    <property type="match status" value="1"/>
</dbReference>
<dbReference type="FunFam" id="3.40.1280.10:FF:000001">
    <property type="entry name" value="tRNA (guanine-N(1)-)-methyltransferase"/>
    <property type="match status" value="1"/>
</dbReference>
<dbReference type="Gene3D" id="3.40.1280.10">
    <property type="match status" value="1"/>
</dbReference>
<dbReference type="Gene3D" id="1.10.1270.20">
    <property type="entry name" value="tRNA(m1g37)methyltransferase, domain 2"/>
    <property type="match status" value="1"/>
</dbReference>
<dbReference type="HAMAP" id="MF_00605">
    <property type="entry name" value="TrmD"/>
    <property type="match status" value="1"/>
</dbReference>
<dbReference type="InterPro" id="IPR029028">
    <property type="entry name" value="Alpha/beta_knot_MTases"/>
</dbReference>
<dbReference type="InterPro" id="IPR023148">
    <property type="entry name" value="tRNA_m1G_MeTrfase_C_sf"/>
</dbReference>
<dbReference type="InterPro" id="IPR002649">
    <property type="entry name" value="tRNA_m1G_MeTrfase_TrmD"/>
</dbReference>
<dbReference type="InterPro" id="IPR029026">
    <property type="entry name" value="tRNA_m1G_MTases_N"/>
</dbReference>
<dbReference type="InterPro" id="IPR016009">
    <property type="entry name" value="tRNA_MeTrfase_TRMD/TRM10"/>
</dbReference>
<dbReference type="NCBIfam" id="NF000648">
    <property type="entry name" value="PRK00026.1"/>
    <property type="match status" value="1"/>
</dbReference>
<dbReference type="NCBIfam" id="TIGR00088">
    <property type="entry name" value="trmD"/>
    <property type="match status" value="1"/>
</dbReference>
<dbReference type="PANTHER" id="PTHR46417">
    <property type="entry name" value="TRNA (GUANINE-N(1)-)-METHYLTRANSFERASE"/>
    <property type="match status" value="1"/>
</dbReference>
<dbReference type="PANTHER" id="PTHR46417:SF1">
    <property type="entry name" value="TRNA (GUANINE-N(1)-)-METHYLTRANSFERASE"/>
    <property type="match status" value="1"/>
</dbReference>
<dbReference type="Pfam" id="PF01746">
    <property type="entry name" value="tRNA_m1G_MT"/>
    <property type="match status" value="1"/>
</dbReference>
<dbReference type="PIRSF" id="PIRSF000386">
    <property type="entry name" value="tRNA_mtase"/>
    <property type="match status" value="1"/>
</dbReference>
<dbReference type="SUPFAM" id="SSF75217">
    <property type="entry name" value="alpha/beta knot"/>
    <property type="match status" value="1"/>
</dbReference>
<comment type="function">
    <text evidence="1">Specifically methylates guanosine-37 in various tRNAs.</text>
</comment>
<comment type="catalytic activity">
    <reaction evidence="1">
        <text>guanosine(37) in tRNA + S-adenosyl-L-methionine = N(1)-methylguanosine(37) in tRNA + S-adenosyl-L-homocysteine + H(+)</text>
        <dbReference type="Rhea" id="RHEA:36899"/>
        <dbReference type="Rhea" id="RHEA-COMP:10145"/>
        <dbReference type="Rhea" id="RHEA-COMP:10147"/>
        <dbReference type="ChEBI" id="CHEBI:15378"/>
        <dbReference type="ChEBI" id="CHEBI:57856"/>
        <dbReference type="ChEBI" id="CHEBI:59789"/>
        <dbReference type="ChEBI" id="CHEBI:73542"/>
        <dbReference type="ChEBI" id="CHEBI:74269"/>
        <dbReference type="EC" id="2.1.1.228"/>
    </reaction>
</comment>
<comment type="subunit">
    <text evidence="1">Homodimer.</text>
</comment>
<comment type="subcellular location">
    <subcellularLocation>
        <location evidence="1">Cytoplasm</location>
    </subcellularLocation>
</comment>
<comment type="similarity">
    <text evidence="1">Belongs to the RNA methyltransferase TrmD family.</text>
</comment>
<accession>Q8CWM2</accession>
<name>TRMD_THEVB</name>
<sequence>MRFDIITLFPEFFASPLSSGLMAKALARGIAEVVLTNPRHFSTDKHQRVDDEPYGGGVGMVMKPEPLFAAVESLPALPRREVIYVTPQGQPLTQQHLWHWSRERDQLVILCGHYEGVDERVVEHLVTQEISIGDFVLTCGEIPALVILNGVLRLLPGTVGKAASLHQDSFEDGLLDYPHYTRPAEFRGWTVPPVLLSGHHGEIAAWRRAQQIERTRQRRPDLYARWLARTQGQAKTH</sequence>